<organism>
    <name type="scientific">Paracoccus denitrificans</name>
    <dbReference type="NCBI Taxonomy" id="266"/>
    <lineage>
        <taxon>Bacteria</taxon>
        <taxon>Pseudomonadati</taxon>
        <taxon>Pseudomonadota</taxon>
        <taxon>Alphaproteobacteria</taxon>
        <taxon>Rhodobacterales</taxon>
        <taxon>Paracoccaceae</taxon>
        <taxon>Paracoccus</taxon>
    </lineage>
</organism>
<name>BHCC_PARDE</name>
<sequence length="387" mass="41633">MNAKTDFSGYEVGYDIPALPGMDESEIQTPCLILDLDALERNIRKMGDYAKAHGMRHRSHGKMHKSVDVQKLQESLGGSVGVCCQKVSEAEAFARGGIKDVLVTNEVREPAKIDRLARLPKTGATVTVCVDDVQNIADLSAAAQKHGTELGIFVEIDCGAGRCGVTTKEAVVEIAKAAAAAPNLTFKGIQAYQGRDAAHGQLRGPQGQAGRRHCPGERGRGRAGGRGLAPEFVSGGGTGSYYFESNSGIYNELQCGSYAFMDADYGRIHDAEGKRIDQGEWENALFILTSVMSHAKPHLAVVDAGLKAQSVDSGLPFVYGRDDVKYIKCSDEHGVVEDKDGVLKVNDKLRLVPGHCDPTCNVHDWYVGVRNGKVETVWPVSARGKGY</sequence>
<dbReference type="EC" id="4.1.3.41" evidence="3"/>
<dbReference type="EMBL" id="AB075600">
    <property type="protein sequence ID" value="BAC20179.1"/>
    <property type="molecule type" value="Genomic_DNA"/>
</dbReference>
<dbReference type="SMR" id="Q8GRC8"/>
<dbReference type="KEGG" id="ag:BAC20179"/>
<dbReference type="BioCyc" id="MetaCyc:MONOMER-15943"/>
<dbReference type="BRENDA" id="4.1.3.41">
    <property type="organism ID" value="3341"/>
</dbReference>
<dbReference type="GO" id="GO:0008721">
    <property type="term" value="F:D-serine ammonia-lyase activity"/>
    <property type="evidence" value="ECO:0007669"/>
    <property type="project" value="TreeGrafter"/>
</dbReference>
<dbReference type="GO" id="GO:0046872">
    <property type="term" value="F:metal ion binding"/>
    <property type="evidence" value="ECO:0007669"/>
    <property type="project" value="UniProtKB-KW"/>
</dbReference>
<dbReference type="GO" id="GO:0016833">
    <property type="term" value="F:oxo-acid-lyase activity"/>
    <property type="evidence" value="ECO:0000314"/>
    <property type="project" value="UniProtKB"/>
</dbReference>
<dbReference type="GO" id="GO:0030170">
    <property type="term" value="F:pyridoxal phosphate binding"/>
    <property type="evidence" value="ECO:0000314"/>
    <property type="project" value="UniProtKB"/>
</dbReference>
<dbReference type="GO" id="GO:0036088">
    <property type="term" value="P:D-serine catabolic process"/>
    <property type="evidence" value="ECO:0007669"/>
    <property type="project" value="TreeGrafter"/>
</dbReference>
<dbReference type="CDD" id="cd06819">
    <property type="entry name" value="PLPDE_III_LS_D-TA"/>
    <property type="match status" value="1"/>
</dbReference>
<dbReference type="FunFam" id="2.40.37.20:FF:000001">
    <property type="entry name" value="D-3-hydroxyaspartate aldolase"/>
    <property type="match status" value="1"/>
</dbReference>
<dbReference type="FunFam" id="3.20.20.10:FF:000026">
    <property type="entry name" value="D-threonine aldolase"/>
    <property type="match status" value="1"/>
</dbReference>
<dbReference type="Gene3D" id="3.20.20.10">
    <property type="entry name" value="Alanine racemase"/>
    <property type="match status" value="1"/>
</dbReference>
<dbReference type="Gene3D" id="2.40.37.20">
    <property type="entry name" value="D-serine dehydratase-like domain"/>
    <property type="match status" value="1"/>
</dbReference>
<dbReference type="InterPro" id="IPR001608">
    <property type="entry name" value="Ala_racemase_N"/>
</dbReference>
<dbReference type="InterPro" id="IPR051466">
    <property type="entry name" value="D-amino_acid_metab_enzyme"/>
</dbReference>
<dbReference type="InterPro" id="IPR026956">
    <property type="entry name" value="D-ser_dehydrat-like_dom"/>
</dbReference>
<dbReference type="InterPro" id="IPR042208">
    <property type="entry name" value="D-ser_dehydrat-like_sf"/>
</dbReference>
<dbReference type="InterPro" id="IPR054854">
    <property type="entry name" value="HdxyAspAldBhcC"/>
</dbReference>
<dbReference type="InterPro" id="IPR029066">
    <property type="entry name" value="PLP-binding_barrel"/>
</dbReference>
<dbReference type="NCBIfam" id="NF045642">
    <property type="entry name" value="HdxyAspAldBhcC"/>
    <property type="match status" value="1"/>
</dbReference>
<dbReference type="PANTHER" id="PTHR28004:SF2">
    <property type="entry name" value="D-SERINE DEHYDRATASE"/>
    <property type="match status" value="1"/>
</dbReference>
<dbReference type="PANTHER" id="PTHR28004">
    <property type="entry name" value="ZGC:162816-RELATED"/>
    <property type="match status" value="1"/>
</dbReference>
<dbReference type="Pfam" id="PF01168">
    <property type="entry name" value="Ala_racemase_N"/>
    <property type="match status" value="1"/>
</dbReference>
<dbReference type="Pfam" id="PF14031">
    <property type="entry name" value="D-ser_dehydrat"/>
    <property type="match status" value="1"/>
</dbReference>
<dbReference type="SMART" id="SM01119">
    <property type="entry name" value="D-ser_dehydrat"/>
    <property type="match status" value="1"/>
</dbReference>
<dbReference type="SUPFAM" id="SSF51419">
    <property type="entry name" value="PLP-binding barrel"/>
    <property type="match status" value="1"/>
</dbReference>
<evidence type="ECO:0000250" key="1">
    <source>
        <dbReference type="UniProtKB" id="A1B8Z1"/>
    </source>
</evidence>
<evidence type="ECO:0000256" key="2">
    <source>
        <dbReference type="SAM" id="MobiDB-lite"/>
    </source>
</evidence>
<evidence type="ECO:0000269" key="3">
    <source>
    </source>
</evidence>
<evidence type="ECO:0000303" key="4">
    <source>
    </source>
</evidence>
<evidence type="ECO:0000305" key="5"/>
<evidence type="ECO:0000305" key="6">
    <source>
    </source>
</evidence>
<proteinExistence type="evidence at protein level"/>
<feature type="chain" id="PRO_0000418597" description="3-hydroxy-D-aspartate aldolase">
    <location>
        <begin position="1"/>
        <end position="387"/>
    </location>
</feature>
<feature type="region of interest" description="Disordered" evidence="2">
    <location>
        <begin position="199"/>
        <end position="228"/>
    </location>
</feature>
<feature type="binding site" evidence="1">
    <location>
        <position position="85"/>
    </location>
    <ligand>
        <name>pyridoxal 5'-phosphate</name>
        <dbReference type="ChEBI" id="CHEBI:597326"/>
    </ligand>
</feature>
<feature type="binding site" evidence="1">
    <location>
        <position position="238"/>
    </location>
    <ligand>
        <name>pyridoxal 5'-phosphate</name>
        <dbReference type="ChEBI" id="CHEBI:597326"/>
    </ligand>
</feature>
<feature type="binding site" evidence="1">
    <location>
        <begin position="256"/>
        <end position="257"/>
    </location>
    <ligand>
        <name>pyridoxal 5'-phosphate</name>
        <dbReference type="ChEBI" id="CHEBI:597326"/>
    </ligand>
</feature>
<feature type="binding site" evidence="1">
    <location>
        <position position="265"/>
    </location>
    <ligand>
        <name>pyridoxal 5'-phosphate</name>
        <dbReference type="ChEBI" id="CHEBI:597326"/>
    </ligand>
</feature>
<feature type="binding site" evidence="1">
    <location>
        <position position="355"/>
    </location>
    <ligand>
        <name>Mg(2+)</name>
        <dbReference type="ChEBI" id="CHEBI:18420"/>
    </ligand>
</feature>
<feature type="binding site" evidence="1">
    <location>
        <position position="357"/>
    </location>
    <ligand>
        <name>Mg(2+)</name>
        <dbReference type="ChEBI" id="CHEBI:18420"/>
    </ligand>
</feature>
<feature type="modified residue" description="N6-(pyridoxal phosphate)lysine" evidence="1">
    <location>
        <position position="62"/>
    </location>
</feature>
<keyword id="KW-0170">Cobalt</keyword>
<keyword id="KW-0903">Direct protein sequencing</keyword>
<keyword id="KW-0456">Lyase</keyword>
<keyword id="KW-0460">Magnesium</keyword>
<keyword id="KW-0464">Manganese</keyword>
<keyword id="KW-0479">Metal-binding</keyword>
<keyword id="KW-0663">Pyridoxal phosphate</keyword>
<protein>
    <recommendedName>
        <fullName evidence="6">3-hydroxy-D-aspartate aldolase</fullName>
        <ecNumber evidence="3">4.1.3.41</ecNumber>
    </recommendedName>
    <alternativeName>
        <fullName evidence="4">D-3-hydroxyaspartate aldolase</fullName>
        <shortName evidence="4">D-HAA</shortName>
    </alternativeName>
</protein>
<reference key="1">
    <citation type="journal article" date="2003" name="Appl. Microbiol. Biotechnol.">
        <title>A novel enzyme, D-3-hydroxyaspartate aldolase from Paracoccus denitrificans IFO 13301: purification, characterization, and gene cloning.</title>
        <authorList>
            <person name="Liu J.Q."/>
            <person name="Dairi T."/>
            <person name="Itoh N."/>
            <person name="Kataoka M."/>
            <person name="Shimizu S."/>
        </authorList>
    </citation>
    <scope>NUCLEOTIDE SEQUENCE [GENOMIC DNA]</scope>
    <scope>PROTEIN SEQUENCE OF 1-23</scope>
    <scope>FUNCTION</scope>
    <scope>CATALYTIC ACTIVITY</scope>
    <scope>COFACTOR</scope>
    <scope>BIOPHYSICOCHEMICAL PROPERTIES</scope>
    <scope>SUBUNIT</scope>
    <source>
        <strain>ATCC 19367 / NBRC 13301 / NCIMB 8944 / NRRL B-3785</strain>
    </source>
</reference>
<gene>
    <name type="primary">dhaa</name>
</gene>
<comment type="function">
    <text evidence="1 3">Catalyzes the condensation of glyoxylate and glycine into (2R,3S)-beta-hydroxyaspartate ((3S)-3-hydroxy-D-aspartate). Functions in glyoxylate assimilation via the beta-hydroxyaspartate cycle (BHAC) (By similarity). In vitro catalyzes the cleavage of both D-erythro- and D-threo-3-hydroxyaspartate to glycine and glyoxylate. Also acts on D-threonine, D-3-phenylserine and D-3-3,4-methylenedioxyphenylserine (PubMed:12835921).</text>
</comment>
<comment type="catalytic activity">
    <reaction evidence="3">
        <text>(3S)-3-hydroxy-D-aspartate = glyoxylate + glycine</text>
        <dbReference type="Rhea" id="RHEA:27934"/>
        <dbReference type="ChEBI" id="CHEBI:36655"/>
        <dbReference type="ChEBI" id="CHEBI:57305"/>
        <dbReference type="ChEBI" id="CHEBI:60894"/>
        <dbReference type="EC" id="4.1.3.41"/>
    </reaction>
    <physiologicalReaction direction="right-to-left" evidence="1">
        <dbReference type="Rhea" id="RHEA:27936"/>
    </physiologicalReaction>
</comment>
<comment type="catalytic activity">
    <reaction evidence="3">
        <text>(3R)-3-hydroxy-D-aspartate = glyoxylate + glycine</text>
        <dbReference type="Rhea" id="RHEA:27938"/>
        <dbReference type="ChEBI" id="CHEBI:36655"/>
        <dbReference type="ChEBI" id="CHEBI:57305"/>
        <dbReference type="ChEBI" id="CHEBI:60898"/>
        <dbReference type="EC" id="4.1.3.41"/>
    </reaction>
</comment>
<comment type="cofactor">
    <cofactor evidence="3">
        <name>pyridoxal 5'-phosphate</name>
        <dbReference type="ChEBI" id="CHEBI:597326"/>
    </cofactor>
</comment>
<comment type="cofactor">
    <cofactor evidence="3">
        <name>Mn(2+)</name>
        <dbReference type="ChEBI" id="CHEBI:29035"/>
    </cofactor>
    <cofactor evidence="3">
        <name>Mg(2+)</name>
        <dbReference type="ChEBI" id="CHEBI:18420"/>
    </cofactor>
    <cofactor evidence="3">
        <name>Co(2+)</name>
        <dbReference type="ChEBI" id="CHEBI:48828"/>
    </cofactor>
    <text evidence="3">Divalent metal cation. Can use Mn(2+), Mg(2+) or Co(2+).</text>
</comment>
<comment type="biophysicochemical properties">
    <kinetics>
        <KM evidence="3">0.4 mM for D-erythro-3-hydroxyaspartate</KM>
        <Vmax evidence="3">30.0 umol/min/mg enzyme with D-erythro-3-hydroxyaspartate as substrate</Vmax>
    </kinetics>
    <phDependence>
        <text evidence="3">Optimum pH is 9.0.</text>
    </phDependence>
    <temperatureDependence>
        <text evidence="3">Optimum temperature is 35 degrees Celsius.</text>
    </temperatureDependence>
</comment>
<comment type="subunit">
    <text evidence="3">Homodimer.</text>
</comment>
<comment type="miscellaneous">
    <text evidence="6">Strictly D-specific as to the alpha-position, but does not distinguish between threo and erythro forms at the beta-position.</text>
</comment>
<comment type="similarity">
    <text evidence="5">Belongs to the DSD1 family.</text>
</comment>
<accession>Q8GRC8</accession>